<sequence length="351" mass="37444">MTYAIVVADATKRYGDFVALDHVDFVVPTGSLTALLGPSGSGKSTLLRTIAGLDQPDTGTITINGRDVTRVPPQRRGIGFVFQHYAAFKHLTVRDNVAFGLKIRKRPKAEIKAKVDNLLQVVGLSGFQSRYPNQLSGGQRQRMALARALAVDPEVLLLDEPFGALDAKVREELRAWLRRLHDEVHVTTVLVTHDQAEALDVADRIAVLHKGRIEQVGSPTDVYDAPANAFVMSFLGAVSTLNGSLVRPHDIRVGRTPNMAVAAADGTAGSTGVLRAVVDRVVVLGFEVRVELTSAATGGAFTAQITRGDAEALALREGDTVYVRATRVPPIAGGVSGVDDAGVERVKVTST</sequence>
<gene>
    <name evidence="1" type="primary">cysA</name>
    <name type="ordered locus">Rv2397c</name>
    <name type="ORF">MTCY253.24</name>
</gene>
<protein>
    <recommendedName>
        <fullName evidence="1">Sulfate/thiosulfate import ATP-binding protein CysA</fullName>
        <ecNumber evidence="1">7.3.2.3</ecNumber>
    </recommendedName>
    <alternativeName>
        <fullName evidence="1">Sulfate-transporting ATPase</fullName>
    </alternativeName>
</protein>
<feature type="initiator methionine" description="Removed" evidence="2">
    <location>
        <position position="1"/>
    </location>
</feature>
<feature type="chain" id="PRO_0000092276" description="Sulfate/thiosulfate import ATP-binding protein CysA">
    <location>
        <begin position="2"/>
        <end position="351"/>
    </location>
</feature>
<feature type="domain" description="ABC transporter" evidence="1">
    <location>
        <begin position="5"/>
        <end position="235"/>
    </location>
</feature>
<feature type="binding site" evidence="1">
    <location>
        <begin position="37"/>
        <end position="44"/>
    </location>
    <ligand>
        <name>ATP</name>
        <dbReference type="ChEBI" id="CHEBI:30616"/>
    </ligand>
</feature>
<feature type="modified residue" description="N-acetylthreonine" evidence="2">
    <location>
        <position position="2"/>
    </location>
</feature>
<name>CYSA_MYCTU</name>
<evidence type="ECO:0000255" key="1">
    <source>
        <dbReference type="HAMAP-Rule" id="MF_01701"/>
    </source>
</evidence>
<evidence type="ECO:0007744" key="2">
    <source>
    </source>
</evidence>
<organism>
    <name type="scientific">Mycobacterium tuberculosis (strain ATCC 25618 / H37Rv)</name>
    <dbReference type="NCBI Taxonomy" id="83332"/>
    <lineage>
        <taxon>Bacteria</taxon>
        <taxon>Bacillati</taxon>
        <taxon>Actinomycetota</taxon>
        <taxon>Actinomycetes</taxon>
        <taxon>Mycobacteriales</taxon>
        <taxon>Mycobacteriaceae</taxon>
        <taxon>Mycobacterium</taxon>
        <taxon>Mycobacterium tuberculosis complex</taxon>
    </lineage>
</organism>
<comment type="function">
    <text>Part of the ABC transporter complex CysAWTP involved in sulfate/thiosulfate import. Responsible for energy coupling to the transport system.</text>
</comment>
<comment type="catalytic activity">
    <reaction evidence="1">
        <text>sulfate(out) + ATP + H2O = sulfate(in) + ADP + phosphate + H(+)</text>
        <dbReference type="Rhea" id="RHEA:10192"/>
        <dbReference type="ChEBI" id="CHEBI:15377"/>
        <dbReference type="ChEBI" id="CHEBI:15378"/>
        <dbReference type="ChEBI" id="CHEBI:16189"/>
        <dbReference type="ChEBI" id="CHEBI:30616"/>
        <dbReference type="ChEBI" id="CHEBI:43474"/>
        <dbReference type="ChEBI" id="CHEBI:456216"/>
        <dbReference type="EC" id="7.3.2.3"/>
    </reaction>
</comment>
<comment type="catalytic activity">
    <reaction evidence="1">
        <text>thiosulfate(out) + ATP + H2O = thiosulfate(in) + ADP + phosphate + H(+)</text>
        <dbReference type="Rhea" id="RHEA:29871"/>
        <dbReference type="ChEBI" id="CHEBI:15377"/>
        <dbReference type="ChEBI" id="CHEBI:15378"/>
        <dbReference type="ChEBI" id="CHEBI:30616"/>
        <dbReference type="ChEBI" id="CHEBI:33542"/>
        <dbReference type="ChEBI" id="CHEBI:43474"/>
        <dbReference type="ChEBI" id="CHEBI:456216"/>
        <dbReference type="EC" id="7.3.2.3"/>
    </reaction>
</comment>
<comment type="subunit">
    <text evidence="1">The complex is composed of two ATP-binding proteins (CysA), two transmembrane proteins (CysT and CysW) and a solute-binding protein (CysP).</text>
</comment>
<comment type="subcellular location">
    <subcellularLocation>
        <location evidence="1">Cell membrane</location>
        <topology evidence="1">Peripheral membrane protein</topology>
    </subcellularLocation>
</comment>
<comment type="similarity">
    <text evidence="1">Belongs to the ABC transporter superfamily. Sulfate/tungstate importer (TC 3.A.1.6) family.</text>
</comment>
<keyword id="KW-0007">Acetylation</keyword>
<keyword id="KW-0067">ATP-binding</keyword>
<keyword id="KW-1003">Cell membrane</keyword>
<keyword id="KW-0472">Membrane</keyword>
<keyword id="KW-0547">Nucleotide-binding</keyword>
<keyword id="KW-1185">Reference proteome</keyword>
<keyword id="KW-0764">Sulfate transport</keyword>
<keyword id="KW-1278">Translocase</keyword>
<keyword id="KW-0813">Transport</keyword>
<reference key="1">
    <citation type="journal article" date="1998" name="Nature">
        <title>Deciphering the biology of Mycobacterium tuberculosis from the complete genome sequence.</title>
        <authorList>
            <person name="Cole S.T."/>
            <person name="Brosch R."/>
            <person name="Parkhill J."/>
            <person name="Garnier T."/>
            <person name="Churcher C.M."/>
            <person name="Harris D.E."/>
            <person name="Gordon S.V."/>
            <person name="Eiglmeier K."/>
            <person name="Gas S."/>
            <person name="Barry C.E. III"/>
            <person name="Tekaia F."/>
            <person name="Badcock K."/>
            <person name="Basham D."/>
            <person name="Brown D."/>
            <person name="Chillingworth T."/>
            <person name="Connor R."/>
            <person name="Davies R.M."/>
            <person name="Devlin K."/>
            <person name="Feltwell T."/>
            <person name="Gentles S."/>
            <person name="Hamlin N."/>
            <person name="Holroyd S."/>
            <person name="Hornsby T."/>
            <person name="Jagels K."/>
            <person name="Krogh A."/>
            <person name="McLean J."/>
            <person name="Moule S."/>
            <person name="Murphy L.D."/>
            <person name="Oliver S."/>
            <person name="Osborne J."/>
            <person name="Quail M.A."/>
            <person name="Rajandream M.A."/>
            <person name="Rogers J."/>
            <person name="Rutter S."/>
            <person name="Seeger K."/>
            <person name="Skelton S."/>
            <person name="Squares S."/>
            <person name="Squares R."/>
            <person name="Sulston J.E."/>
            <person name="Taylor K."/>
            <person name="Whitehead S."/>
            <person name="Barrell B.G."/>
        </authorList>
    </citation>
    <scope>NUCLEOTIDE SEQUENCE [LARGE SCALE GENOMIC DNA]</scope>
    <source>
        <strain>ATCC 25618 / H37Rv</strain>
    </source>
</reference>
<reference key="2">
    <citation type="journal article" date="2002" name="Mol. Microbiol.">
        <title>Functional genomics reveals the sole sulphate transporter of the Mycobacterium tuberculosis complex and its relevance to the acquisition of sulphur in vivo.</title>
        <authorList>
            <person name="Wooff E."/>
            <person name="Michell S.L.I."/>
            <person name="Gordon S.V."/>
            <person name="Chambers M.A."/>
            <person name="Bardarov S."/>
            <person name="Jacobs W.R. Jr."/>
            <person name="Hewinson R.G."/>
            <person name="Wheeler P.R."/>
        </authorList>
    </citation>
    <scope>CHARACTERIZATION</scope>
</reference>
<reference key="3">
    <citation type="journal article" date="2011" name="Mol. Cell. Proteomics">
        <title>Proteogenomic analysis of Mycobacterium tuberculosis by high resolution mass spectrometry.</title>
        <authorList>
            <person name="Kelkar D.S."/>
            <person name="Kumar D."/>
            <person name="Kumar P."/>
            <person name="Balakrishnan L."/>
            <person name="Muthusamy B."/>
            <person name="Yadav A.K."/>
            <person name="Shrivastava P."/>
            <person name="Marimuthu A."/>
            <person name="Anand S."/>
            <person name="Sundaram H."/>
            <person name="Kingsbury R."/>
            <person name="Harsha H.C."/>
            <person name="Nair B."/>
            <person name="Prasad T.S."/>
            <person name="Chauhan D.S."/>
            <person name="Katoch K."/>
            <person name="Katoch V.M."/>
            <person name="Kumar P."/>
            <person name="Chaerkady R."/>
            <person name="Ramachandran S."/>
            <person name="Dash D."/>
            <person name="Pandey A."/>
        </authorList>
    </citation>
    <scope>ACETYLATION [LARGE SCALE ANALYSIS] AT THR-2</scope>
    <scope>CLEAVAGE OF INITIATOR METHIONINE [LARGE SCALE ANALYSIS]</scope>
    <scope>IDENTIFICATION BY MASS SPECTROMETRY [LARGE SCALE ANALYSIS]</scope>
    <source>
        <strain>ATCC 25618 / H37Rv</strain>
    </source>
</reference>
<accession>P9WQM1</accession>
<accession>L0TC79</accession>
<accession>P0A4W2</accession>
<accession>P71747</accession>
<dbReference type="EC" id="7.3.2.3" evidence="1"/>
<dbReference type="EMBL" id="AL123456">
    <property type="protein sequence ID" value="CCP45187.1"/>
    <property type="molecule type" value="Genomic_DNA"/>
</dbReference>
<dbReference type="PIR" id="H70682">
    <property type="entry name" value="H70682"/>
</dbReference>
<dbReference type="RefSeq" id="WP_003412325.1">
    <property type="nucleotide sequence ID" value="NZ_NVQJ01000054.1"/>
</dbReference>
<dbReference type="RefSeq" id="YP_177879.1">
    <property type="nucleotide sequence ID" value="NC_000962.3"/>
</dbReference>
<dbReference type="SMR" id="P9WQM1"/>
<dbReference type="FunCoup" id="P9WQM1">
    <property type="interactions" value="135"/>
</dbReference>
<dbReference type="STRING" id="83332.Rv2397c"/>
<dbReference type="iPTMnet" id="P9WQM1"/>
<dbReference type="PaxDb" id="83332-Rv2397c"/>
<dbReference type="DNASU" id="885663"/>
<dbReference type="GeneID" id="885663"/>
<dbReference type="KEGG" id="mtu:Rv2397c"/>
<dbReference type="KEGG" id="mtv:RVBD_2397c"/>
<dbReference type="TubercuList" id="Rv2397c"/>
<dbReference type="eggNOG" id="COG1118">
    <property type="taxonomic scope" value="Bacteria"/>
</dbReference>
<dbReference type="InParanoid" id="P9WQM1"/>
<dbReference type="OrthoDB" id="9802264at2"/>
<dbReference type="PhylomeDB" id="P9WQM1"/>
<dbReference type="Reactome" id="R-MTU-936635">
    <property type="pathway name" value="Sulfate assimilation"/>
</dbReference>
<dbReference type="Proteomes" id="UP000001584">
    <property type="component" value="Chromosome"/>
</dbReference>
<dbReference type="GO" id="GO:0043190">
    <property type="term" value="C:ATP-binding cassette (ABC) transporter complex"/>
    <property type="evidence" value="ECO:0007669"/>
    <property type="project" value="InterPro"/>
</dbReference>
<dbReference type="GO" id="GO:0005886">
    <property type="term" value="C:plasma membrane"/>
    <property type="evidence" value="ECO:0000304"/>
    <property type="project" value="Reactome"/>
</dbReference>
<dbReference type="GO" id="GO:0015419">
    <property type="term" value="F:ABC-type sulfate transporter activity"/>
    <property type="evidence" value="ECO:0007669"/>
    <property type="project" value="InterPro"/>
</dbReference>
<dbReference type="GO" id="GO:0102025">
    <property type="term" value="F:ABC-type thiosulfate transporter activity"/>
    <property type="evidence" value="ECO:0007669"/>
    <property type="project" value="RHEA"/>
</dbReference>
<dbReference type="GO" id="GO:0005524">
    <property type="term" value="F:ATP binding"/>
    <property type="evidence" value="ECO:0007669"/>
    <property type="project" value="UniProtKB-KW"/>
</dbReference>
<dbReference type="GO" id="GO:0016887">
    <property type="term" value="F:ATP hydrolysis activity"/>
    <property type="evidence" value="ECO:0007669"/>
    <property type="project" value="InterPro"/>
</dbReference>
<dbReference type="GO" id="GO:1902358">
    <property type="term" value="P:sulfate transmembrane transport"/>
    <property type="evidence" value="ECO:0000315"/>
    <property type="project" value="MTBBASE"/>
</dbReference>
<dbReference type="CDD" id="cd03296">
    <property type="entry name" value="ABC_CysA_sulfate_importer"/>
    <property type="match status" value="1"/>
</dbReference>
<dbReference type="FunFam" id="3.40.50.300:FF:001655">
    <property type="entry name" value="Sulfate/thiosulfate import ATP-binding protein CysA"/>
    <property type="match status" value="1"/>
</dbReference>
<dbReference type="Gene3D" id="3.40.50.300">
    <property type="entry name" value="P-loop containing nucleotide triphosphate hydrolases"/>
    <property type="match status" value="1"/>
</dbReference>
<dbReference type="InterPro" id="IPR003593">
    <property type="entry name" value="AAA+_ATPase"/>
</dbReference>
<dbReference type="InterPro" id="IPR050093">
    <property type="entry name" value="ABC_SmlMolc_Importer"/>
</dbReference>
<dbReference type="InterPro" id="IPR003439">
    <property type="entry name" value="ABC_transporter-like_ATP-bd"/>
</dbReference>
<dbReference type="InterPro" id="IPR017871">
    <property type="entry name" value="ABC_transporter-like_CS"/>
</dbReference>
<dbReference type="InterPro" id="IPR008995">
    <property type="entry name" value="Mo/tungstate-bd_C_term_dom"/>
</dbReference>
<dbReference type="InterPro" id="IPR027417">
    <property type="entry name" value="P-loop_NTPase"/>
</dbReference>
<dbReference type="InterPro" id="IPR005666">
    <property type="entry name" value="Sulph_transpt1"/>
</dbReference>
<dbReference type="InterPro" id="IPR024765">
    <property type="entry name" value="TOBE-like"/>
</dbReference>
<dbReference type="NCBIfam" id="TIGR00968">
    <property type="entry name" value="3a0106s01"/>
    <property type="match status" value="1"/>
</dbReference>
<dbReference type="PANTHER" id="PTHR42781">
    <property type="entry name" value="SPERMIDINE/PUTRESCINE IMPORT ATP-BINDING PROTEIN POTA"/>
    <property type="match status" value="1"/>
</dbReference>
<dbReference type="PANTHER" id="PTHR42781:SF4">
    <property type="entry name" value="SPERMIDINE_PUTRESCINE IMPORT ATP-BINDING PROTEIN POTA"/>
    <property type="match status" value="1"/>
</dbReference>
<dbReference type="Pfam" id="PF00005">
    <property type="entry name" value="ABC_tran"/>
    <property type="match status" value="1"/>
</dbReference>
<dbReference type="Pfam" id="PF12857">
    <property type="entry name" value="TOBE_3"/>
    <property type="match status" value="1"/>
</dbReference>
<dbReference type="SMART" id="SM00382">
    <property type="entry name" value="AAA"/>
    <property type="match status" value="1"/>
</dbReference>
<dbReference type="SUPFAM" id="SSF50331">
    <property type="entry name" value="MOP-like"/>
    <property type="match status" value="1"/>
</dbReference>
<dbReference type="SUPFAM" id="SSF52540">
    <property type="entry name" value="P-loop containing nucleoside triphosphate hydrolases"/>
    <property type="match status" value="1"/>
</dbReference>
<dbReference type="PROSITE" id="PS00211">
    <property type="entry name" value="ABC_TRANSPORTER_1"/>
    <property type="match status" value="1"/>
</dbReference>
<dbReference type="PROSITE" id="PS50893">
    <property type="entry name" value="ABC_TRANSPORTER_2"/>
    <property type="match status" value="1"/>
</dbReference>
<dbReference type="PROSITE" id="PS51237">
    <property type="entry name" value="CYSA"/>
    <property type="match status" value="1"/>
</dbReference>
<proteinExistence type="evidence at protein level"/>